<feature type="chain" id="PRO_0000239746" description="Mitogen-activated protein kinase 3">
    <location>
        <begin position="1"/>
        <end position="370"/>
    </location>
</feature>
<feature type="domain" description="Protein kinase" evidence="2">
    <location>
        <begin position="32"/>
        <end position="319"/>
    </location>
</feature>
<feature type="short sequence motif" description="TXY">
    <location>
        <begin position="191"/>
        <end position="193"/>
    </location>
</feature>
<feature type="active site" description="Proton acceptor" evidence="2 3">
    <location>
        <position position="158"/>
    </location>
</feature>
<feature type="binding site" evidence="2">
    <location>
        <begin position="38"/>
        <end position="46"/>
    </location>
    <ligand>
        <name>ATP</name>
        <dbReference type="ChEBI" id="CHEBI:30616"/>
    </ligand>
</feature>
<feature type="binding site" evidence="2">
    <location>
        <position position="61"/>
    </location>
    <ligand>
        <name>ATP</name>
        <dbReference type="ChEBI" id="CHEBI:30616"/>
    </ligand>
</feature>
<feature type="modified residue" description="Phosphothreonine" evidence="1">
    <location>
        <position position="191"/>
    </location>
</feature>
<feature type="modified residue" description="Phosphotyrosine" evidence="1">
    <location>
        <position position="193"/>
    </location>
</feature>
<accession>Q6Z437</accession>
<accession>Q0E3Y5</accession>
<accession>Q9M545</accession>
<organism>
    <name type="scientific">Oryza sativa subsp. japonica</name>
    <name type="common">Rice</name>
    <dbReference type="NCBI Taxonomy" id="39947"/>
    <lineage>
        <taxon>Eukaryota</taxon>
        <taxon>Viridiplantae</taxon>
        <taxon>Streptophyta</taxon>
        <taxon>Embryophyta</taxon>
        <taxon>Tracheophyta</taxon>
        <taxon>Spermatophyta</taxon>
        <taxon>Magnoliopsida</taxon>
        <taxon>Liliopsida</taxon>
        <taxon>Poales</taxon>
        <taxon>Poaceae</taxon>
        <taxon>BOP clade</taxon>
        <taxon>Oryzoideae</taxon>
        <taxon>Oryzeae</taxon>
        <taxon>Oryzinae</taxon>
        <taxon>Oryza</taxon>
        <taxon>Oryza sativa</taxon>
    </lineage>
</organism>
<reference key="1">
    <citation type="journal article" date="2002" name="Plant Physiol.">
        <title>Two novel mitogen-activated protein signaling components, OsMEK1 and OsMAP1, are involved in a moderate low-temperature signaling pathway in rice.</title>
        <authorList>
            <person name="Wen J.-Q."/>
            <person name="Oono K."/>
            <person name="Imai R."/>
        </authorList>
    </citation>
    <scope>NUCLEOTIDE SEQUENCE [MRNA]</scope>
</reference>
<reference key="2">
    <citation type="submission" date="2000-03" db="EMBL/GenBank/DDBJ databases">
        <title>Developmental regulation of a rice MAP kinase gene expression.</title>
        <authorList>
            <person name="Ho S.L."/>
            <person name="Jang J.M."/>
            <person name="Yu S.M."/>
        </authorList>
    </citation>
    <scope>NUCLEOTIDE SEQUENCE [MRNA]</scope>
</reference>
<reference key="3">
    <citation type="journal article" date="2005" name="Nature">
        <title>The map-based sequence of the rice genome.</title>
        <authorList>
            <consortium name="International rice genome sequencing project (IRGSP)"/>
        </authorList>
    </citation>
    <scope>NUCLEOTIDE SEQUENCE [LARGE SCALE GENOMIC DNA]</scope>
    <source>
        <strain>cv. Nipponbare</strain>
    </source>
</reference>
<reference key="4">
    <citation type="journal article" date="2008" name="Nucleic Acids Res.">
        <title>The rice annotation project database (RAP-DB): 2008 update.</title>
        <authorList>
            <consortium name="The rice annotation project (RAP)"/>
        </authorList>
    </citation>
    <scope>GENOME REANNOTATION</scope>
    <source>
        <strain>cv. Nipponbare</strain>
    </source>
</reference>
<reference key="5">
    <citation type="journal article" date="2013" name="Rice">
        <title>Improvement of the Oryza sativa Nipponbare reference genome using next generation sequence and optical map data.</title>
        <authorList>
            <person name="Kawahara Y."/>
            <person name="de la Bastide M."/>
            <person name="Hamilton J.P."/>
            <person name="Kanamori H."/>
            <person name="McCombie W.R."/>
            <person name="Ouyang S."/>
            <person name="Schwartz D.C."/>
            <person name="Tanaka T."/>
            <person name="Wu J."/>
            <person name="Zhou S."/>
            <person name="Childs K.L."/>
            <person name="Davidson R.M."/>
            <person name="Lin H."/>
            <person name="Quesada-Ocampo L."/>
            <person name="Vaillancourt B."/>
            <person name="Sakai H."/>
            <person name="Lee S.S."/>
            <person name="Kim J."/>
            <person name="Numa H."/>
            <person name="Itoh T."/>
            <person name="Buell C.R."/>
            <person name="Matsumoto T."/>
        </authorList>
    </citation>
    <scope>GENOME REANNOTATION</scope>
    <source>
        <strain>cv. Nipponbare</strain>
    </source>
</reference>
<reference key="6">
    <citation type="journal article" date="2003" name="Science">
        <title>Collection, mapping, and annotation of over 28,000 cDNA clones from japonica rice.</title>
        <authorList>
            <consortium name="The rice full-length cDNA consortium"/>
        </authorList>
    </citation>
    <scope>NUCLEOTIDE SEQUENCE [LARGE SCALE MRNA]</scope>
    <source>
        <strain>cv. Nipponbare</strain>
    </source>
</reference>
<reference key="7">
    <citation type="journal article" date="2006" name="Mol. Plant Microbe Interact.">
        <title>Molecular analysis of the rice MAP kinase gene family in relation to Magnaporthe grisea infection.</title>
        <authorList>
            <person name="Reyna N.S."/>
            <person name="Yang Y."/>
        </authorList>
    </citation>
    <scope>NOMENCLATURE</scope>
</reference>
<dbReference type="EC" id="2.7.11.24"/>
<dbReference type="EMBL" id="AF216317">
    <property type="protein sequence ID" value="AAG40581.1"/>
    <property type="molecule type" value="mRNA"/>
</dbReference>
<dbReference type="EMBL" id="AF241166">
    <property type="protein sequence ID" value="AAF61238.1"/>
    <property type="molecule type" value="mRNA"/>
</dbReference>
<dbReference type="EMBL" id="AP005191">
    <property type="protein sequence ID" value="BAD13057.1"/>
    <property type="molecule type" value="Genomic_DNA"/>
</dbReference>
<dbReference type="EMBL" id="AP008208">
    <property type="protein sequence ID" value="BAF07803.1"/>
    <property type="molecule type" value="Genomic_DNA"/>
</dbReference>
<dbReference type="EMBL" id="AP014958">
    <property type="protein sequence ID" value="BAS76982.1"/>
    <property type="molecule type" value="Genomic_DNA"/>
</dbReference>
<dbReference type="EMBL" id="AK119650">
    <property type="protein sequence ID" value="BAG99730.1"/>
    <property type="molecule type" value="mRNA"/>
</dbReference>
<dbReference type="RefSeq" id="XP_015624723.1">
    <property type="nucleotide sequence ID" value="XM_015769237.1"/>
</dbReference>
<dbReference type="RefSeq" id="XP_015624724.1">
    <property type="nucleotide sequence ID" value="XM_015769238.1"/>
</dbReference>
<dbReference type="SMR" id="Q6Z437"/>
<dbReference type="FunCoup" id="Q6Z437">
    <property type="interactions" value="2570"/>
</dbReference>
<dbReference type="IntAct" id="Q6Z437">
    <property type="interactions" value="5"/>
</dbReference>
<dbReference type="STRING" id="39947.Q6Z437"/>
<dbReference type="PaxDb" id="39947-Q6Z437"/>
<dbReference type="EnsemblPlants" id="Os02t0148100-01">
    <property type="protein sequence ID" value="Os02t0148100-01"/>
    <property type="gene ID" value="Os02g0148100"/>
</dbReference>
<dbReference type="GeneID" id="4328297"/>
<dbReference type="Gramene" id="Os02t0148100-01">
    <property type="protein sequence ID" value="Os02t0148100-01"/>
    <property type="gene ID" value="Os02g0148100"/>
</dbReference>
<dbReference type="KEGG" id="dosa:Os02g0148100"/>
<dbReference type="KEGG" id="osa:4328297"/>
<dbReference type="eggNOG" id="KOG0660">
    <property type="taxonomic scope" value="Eukaryota"/>
</dbReference>
<dbReference type="HOGENOM" id="CLU_000288_181_1_1"/>
<dbReference type="InParanoid" id="Q6Z437"/>
<dbReference type="OMA" id="IAMMRFF"/>
<dbReference type="OrthoDB" id="192887at2759"/>
<dbReference type="Proteomes" id="UP000000763">
    <property type="component" value="Chromosome 2"/>
</dbReference>
<dbReference type="Proteomes" id="UP000059680">
    <property type="component" value="Chromosome 2"/>
</dbReference>
<dbReference type="GO" id="GO:0005737">
    <property type="term" value="C:cytoplasm"/>
    <property type="evidence" value="ECO:0000318"/>
    <property type="project" value="GO_Central"/>
</dbReference>
<dbReference type="GO" id="GO:0005634">
    <property type="term" value="C:nucleus"/>
    <property type="evidence" value="ECO:0000318"/>
    <property type="project" value="GO_Central"/>
</dbReference>
<dbReference type="GO" id="GO:0005524">
    <property type="term" value="F:ATP binding"/>
    <property type="evidence" value="ECO:0007669"/>
    <property type="project" value="UniProtKB-KW"/>
</dbReference>
<dbReference type="GO" id="GO:0004707">
    <property type="term" value="F:MAP kinase activity"/>
    <property type="evidence" value="ECO:0007669"/>
    <property type="project" value="UniProtKB-EC"/>
</dbReference>
<dbReference type="GO" id="GO:0106310">
    <property type="term" value="F:protein serine kinase activity"/>
    <property type="evidence" value="ECO:0007669"/>
    <property type="project" value="RHEA"/>
</dbReference>
<dbReference type="GO" id="GO:0004674">
    <property type="term" value="F:protein serine/threonine kinase activity"/>
    <property type="evidence" value="ECO:0000318"/>
    <property type="project" value="GO_Central"/>
</dbReference>
<dbReference type="GO" id="GO:0035556">
    <property type="term" value="P:intracellular signal transduction"/>
    <property type="evidence" value="ECO:0000318"/>
    <property type="project" value="GO_Central"/>
</dbReference>
<dbReference type="CDD" id="cd07858">
    <property type="entry name" value="STKc_TEY_MAPK"/>
    <property type="match status" value="1"/>
</dbReference>
<dbReference type="FunFam" id="1.10.510.10:FF:000206">
    <property type="entry name" value="Mitogen-activated protein kinase"/>
    <property type="match status" value="1"/>
</dbReference>
<dbReference type="FunFam" id="3.30.200.20:FF:000046">
    <property type="entry name" value="Mitogen-activated protein kinase"/>
    <property type="match status" value="1"/>
</dbReference>
<dbReference type="Gene3D" id="3.30.200.20">
    <property type="entry name" value="Phosphorylase Kinase, domain 1"/>
    <property type="match status" value="1"/>
</dbReference>
<dbReference type="Gene3D" id="1.10.510.10">
    <property type="entry name" value="Transferase(Phosphotransferase) domain 1"/>
    <property type="match status" value="1"/>
</dbReference>
<dbReference type="InterPro" id="IPR011009">
    <property type="entry name" value="Kinase-like_dom_sf"/>
</dbReference>
<dbReference type="InterPro" id="IPR050117">
    <property type="entry name" value="MAP_kinase"/>
</dbReference>
<dbReference type="InterPro" id="IPR003527">
    <property type="entry name" value="MAP_kinase_CS"/>
</dbReference>
<dbReference type="InterPro" id="IPR000719">
    <property type="entry name" value="Prot_kinase_dom"/>
</dbReference>
<dbReference type="InterPro" id="IPR017441">
    <property type="entry name" value="Protein_kinase_ATP_BS"/>
</dbReference>
<dbReference type="InterPro" id="IPR008271">
    <property type="entry name" value="Ser/Thr_kinase_AS"/>
</dbReference>
<dbReference type="PANTHER" id="PTHR24055">
    <property type="entry name" value="MITOGEN-ACTIVATED PROTEIN KINASE"/>
    <property type="match status" value="1"/>
</dbReference>
<dbReference type="Pfam" id="PF00069">
    <property type="entry name" value="Pkinase"/>
    <property type="match status" value="1"/>
</dbReference>
<dbReference type="SMART" id="SM00220">
    <property type="entry name" value="S_TKc"/>
    <property type="match status" value="1"/>
</dbReference>
<dbReference type="SUPFAM" id="SSF56112">
    <property type="entry name" value="Protein kinase-like (PK-like)"/>
    <property type="match status" value="1"/>
</dbReference>
<dbReference type="PROSITE" id="PS01351">
    <property type="entry name" value="MAPK"/>
    <property type="match status" value="1"/>
</dbReference>
<dbReference type="PROSITE" id="PS00107">
    <property type="entry name" value="PROTEIN_KINASE_ATP"/>
    <property type="match status" value="1"/>
</dbReference>
<dbReference type="PROSITE" id="PS50011">
    <property type="entry name" value="PROTEIN_KINASE_DOM"/>
    <property type="match status" value="1"/>
</dbReference>
<dbReference type="PROSITE" id="PS00108">
    <property type="entry name" value="PROTEIN_KINASE_ST"/>
    <property type="match status" value="1"/>
</dbReference>
<protein>
    <recommendedName>
        <fullName>Mitogen-activated protein kinase 3</fullName>
        <shortName>MAP kinase 3</shortName>
        <ecNumber>2.7.11.24</ecNumber>
    </recommendedName>
    <alternativeName>
        <fullName>MAP kinase 2</fullName>
    </alternativeName>
    <alternativeName>
        <fullName>OsMAP3</fullName>
    </alternativeName>
    <alternativeName>
        <fullName>OsMAPK2</fullName>
    </alternativeName>
</protein>
<comment type="catalytic activity">
    <reaction>
        <text>L-seryl-[protein] + ATP = O-phospho-L-seryl-[protein] + ADP + H(+)</text>
        <dbReference type="Rhea" id="RHEA:17989"/>
        <dbReference type="Rhea" id="RHEA-COMP:9863"/>
        <dbReference type="Rhea" id="RHEA-COMP:11604"/>
        <dbReference type="ChEBI" id="CHEBI:15378"/>
        <dbReference type="ChEBI" id="CHEBI:29999"/>
        <dbReference type="ChEBI" id="CHEBI:30616"/>
        <dbReference type="ChEBI" id="CHEBI:83421"/>
        <dbReference type="ChEBI" id="CHEBI:456216"/>
        <dbReference type="EC" id="2.7.11.24"/>
    </reaction>
</comment>
<comment type="catalytic activity">
    <reaction>
        <text>L-threonyl-[protein] + ATP = O-phospho-L-threonyl-[protein] + ADP + H(+)</text>
        <dbReference type="Rhea" id="RHEA:46608"/>
        <dbReference type="Rhea" id="RHEA-COMP:11060"/>
        <dbReference type="Rhea" id="RHEA-COMP:11605"/>
        <dbReference type="ChEBI" id="CHEBI:15378"/>
        <dbReference type="ChEBI" id="CHEBI:30013"/>
        <dbReference type="ChEBI" id="CHEBI:30616"/>
        <dbReference type="ChEBI" id="CHEBI:61977"/>
        <dbReference type="ChEBI" id="CHEBI:456216"/>
        <dbReference type="EC" id="2.7.11.24"/>
    </reaction>
</comment>
<comment type="activity regulation">
    <text evidence="1">Activated by threonine and tyrosine phosphorylation.</text>
</comment>
<comment type="domain">
    <text>The TXY motif contains the threonine and tyrosine residues whose phosphorylation activates the MAP kinases.</text>
</comment>
<comment type="PTM">
    <text evidence="1">Dually phosphorylated on Thr-191 and Tyr-193, which activates the enzyme.</text>
</comment>
<comment type="similarity">
    <text evidence="4">Belongs to the protein kinase superfamily. CMGC Ser/Thr protein kinase family. MAP kinase subfamily.</text>
</comment>
<sequence length="370" mass="42469">MAIMVDPPNGMGNQGKYYYSMWQTLFEIDTKYVPIKPIGRGAYGIVCSSINRETNEKVAIKKIHNVFDNRVDALRTLRELKLLRHLRHENVIALKDIMMPVHRRSFKDVYLVYELMDTDLHQIIKSPQGLSNDHCQYFLFQLLRGLKYLHSAEILHRDLKPGNLLVNANCDLKICDFGLARTNSSKGQFMTEYVVTRWYRAPELLLCCDNYGTSIDVWSVGCIFAELLGRKPIFPGTECLNQLKLIVNVLGTMSESDLEFIDNPKARRYIKSLPYTPGVPLASMYPHAHPLAIDLLQKMLIFDPTKRISVTEALEHPYMSPLYDPSANPPAQVPIDLDIDENISADMIREMMWHEMLHYHPEVVAAMSAR</sequence>
<evidence type="ECO:0000250" key="1"/>
<evidence type="ECO:0000255" key="2">
    <source>
        <dbReference type="PROSITE-ProRule" id="PRU00159"/>
    </source>
</evidence>
<evidence type="ECO:0000255" key="3">
    <source>
        <dbReference type="PROSITE-ProRule" id="PRU10027"/>
    </source>
</evidence>
<evidence type="ECO:0000305" key="4"/>
<keyword id="KW-0067">ATP-binding</keyword>
<keyword id="KW-0418">Kinase</keyword>
<keyword id="KW-0547">Nucleotide-binding</keyword>
<keyword id="KW-0597">Phosphoprotein</keyword>
<keyword id="KW-1185">Reference proteome</keyword>
<keyword id="KW-0723">Serine/threonine-protein kinase</keyword>
<keyword id="KW-0808">Transferase</keyword>
<proteinExistence type="evidence at transcript level"/>
<gene>
    <name type="primary">MPK3</name>
    <name type="synonym">MAP3</name>
    <name type="synonym">MAPK2</name>
    <name type="ordered locus">Os02g0148100</name>
    <name type="ordered locus">LOC_Os02g05480</name>
    <name type="ORF">P0479D12.11</name>
</gene>
<name>MPK3_ORYSJ</name>